<accession>Q5X1E5</accession>
<comment type="function">
    <text evidence="1">Catalyzes the addition and repair of the essential 3'-terminal CCA sequence in tRNAs without using a nucleic acid template. Adds these three nucleotides in the order of C, C, and A to the tRNA nucleotide-73, using CTP and ATP as substrates and producing inorganic pyrophosphate. tRNA 3'-terminal CCA addition is required both for tRNA processing and repair. Also involved in tRNA surveillance by mediating tandem CCA addition to generate a CCACCA at the 3' terminus of unstable tRNAs. While stable tRNAs receive only 3'-terminal CCA, unstable tRNAs are marked with CCACCA and rapidly degraded.</text>
</comment>
<comment type="catalytic activity">
    <reaction evidence="1">
        <text>a tRNA precursor + 2 CTP + ATP = a tRNA with a 3' CCA end + 3 diphosphate</text>
        <dbReference type="Rhea" id="RHEA:14433"/>
        <dbReference type="Rhea" id="RHEA-COMP:10465"/>
        <dbReference type="Rhea" id="RHEA-COMP:10468"/>
        <dbReference type="ChEBI" id="CHEBI:30616"/>
        <dbReference type="ChEBI" id="CHEBI:33019"/>
        <dbReference type="ChEBI" id="CHEBI:37563"/>
        <dbReference type="ChEBI" id="CHEBI:74896"/>
        <dbReference type="ChEBI" id="CHEBI:83071"/>
        <dbReference type="EC" id="2.7.7.72"/>
    </reaction>
</comment>
<comment type="catalytic activity">
    <reaction evidence="1">
        <text>a tRNA with a 3' CCA end + 2 CTP + ATP = a tRNA with a 3' CCACCA end + 3 diphosphate</text>
        <dbReference type="Rhea" id="RHEA:76235"/>
        <dbReference type="Rhea" id="RHEA-COMP:10468"/>
        <dbReference type="Rhea" id="RHEA-COMP:18655"/>
        <dbReference type="ChEBI" id="CHEBI:30616"/>
        <dbReference type="ChEBI" id="CHEBI:33019"/>
        <dbReference type="ChEBI" id="CHEBI:37563"/>
        <dbReference type="ChEBI" id="CHEBI:83071"/>
        <dbReference type="ChEBI" id="CHEBI:195187"/>
    </reaction>
    <physiologicalReaction direction="left-to-right" evidence="1">
        <dbReference type="Rhea" id="RHEA:76236"/>
    </physiologicalReaction>
</comment>
<comment type="cofactor">
    <cofactor evidence="1">
        <name>Mg(2+)</name>
        <dbReference type="ChEBI" id="CHEBI:18420"/>
    </cofactor>
    <text evidence="1">Magnesium is required for nucleotidyltransferase activity.</text>
</comment>
<comment type="cofactor">
    <cofactor evidence="1">
        <name>Ni(2+)</name>
        <dbReference type="ChEBI" id="CHEBI:49786"/>
    </cofactor>
    <text evidence="1">Nickel for phosphatase activity.</text>
</comment>
<comment type="subunit">
    <text evidence="1">Monomer. Can also form homodimers and oligomers.</text>
</comment>
<comment type="domain">
    <text evidence="1">Comprises two domains: an N-terminal domain containing the nucleotidyltransferase activity and a C-terminal HD domain associated with both phosphodiesterase and phosphatase activities.</text>
</comment>
<comment type="miscellaneous">
    <text evidence="1">A single active site specifically recognizes both ATP and CTP and is responsible for their addition.</text>
</comment>
<comment type="similarity">
    <text evidence="1">Belongs to the tRNA nucleotidyltransferase/poly(A) polymerase family. Bacterial CCA-adding enzyme type 1 subfamily.</text>
</comment>
<feature type="chain" id="PRO_0000138981" description="Multifunctional CCA protein">
    <location>
        <begin position="1"/>
        <end position="410"/>
    </location>
</feature>
<feature type="domain" description="HD" evidence="1">
    <location>
        <begin position="228"/>
        <end position="329"/>
    </location>
</feature>
<feature type="binding site" evidence="1">
    <location>
        <position position="8"/>
    </location>
    <ligand>
        <name>ATP</name>
        <dbReference type="ChEBI" id="CHEBI:30616"/>
    </ligand>
</feature>
<feature type="binding site" evidence="1">
    <location>
        <position position="8"/>
    </location>
    <ligand>
        <name>CTP</name>
        <dbReference type="ChEBI" id="CHEBI:37563"/>
    </ligand>
</feature>
<feature type="binding site" evidence="1">
    <location>
        <position position="11"/>
    </location>
    <ligand>
        <name>ATP</name>
        <dbReference type="ChEBI" id="CHEBI:30616"/>
    </ligand>
</feature>
<feature type="binding site" evidence="1">
    <location>
        <position position="11"/>
    </location>
    <ligand>
        <name>CTP</name>
        <dbReference type="ChEBI" id="CHEBI:37563"/>
    </ligand>
</feature>
<feature type="binding site" evidence="1">
    <location>
        <position position="21"/>
    </location>
    <ligand>
        <name>Mg(2+)</name>
        <dbReference type="ChEBI" id="CHEBI:18420"/>
    </ligand>
</feature>
<feature type="binding site" evidence="1">
    <location>
        <position position="23"/>
    </location>
    <ligand>
        <name>Mg(2+)</name>
        <dbReference type="ChEBI" id="CHEBI:18420"/>
    </ligand>
</feature>
<feature type="binding site" evidence="1">
    <location>
        <position position="91"/>
    </location>
    <ligand>
        <name>ATP</name>
        <dbReference type="ChEBI" id="CHEBI:30616"/>
    </ligand>
</feature>
<feature type="binding site" evidence="1">
    <location>
        <position position="91"/>
    </location>
    <ligand>
        <name>CTP</name>
        <dbReference type="ChEBI" id="CHEBI:37563"/>
    </ligand>
</feature>
<feature type="binding site" evidence="1">
    <location>
        <position position="137"/>
    </location>
    <ligand>
        <name>ATP</name>
        <dbReference type="ChEBI" id="CHEBI:30616"/>
    </ligand>
</feature>
<feature type="binding site" evidence="1">
    <location>
        <position position="137"/>
    </location>
    <ligand>
        <name>CTP</name>
        <dbReference type="ChEBI" id="CHEBI:37563"/>
    </ligand>
</feature>
<feature type="binding site" evidence="1">
    <location>
        <position position="140"/>
    </location>
    <ligand>
        <name>ATP</name>
        <dbReference type="ChEBI" id="CHEBI:30616"/>
    </ligand>
</feature>
<feature type="binding site" evidence="1">
    <location>
        <position position="140"/>
    </location>
    <ligand>
        <name>CTP</name>
        <dbReference type="ChEBI" id="CHEBI:37563"/>
    </ligand>
</feature>
<reference key="1">
    <citation type="journal article" date="2004" name="Nat. Genet.">
        <title>Evidence in the Legionella pneumophila genome for exploitation of host cell functions and high genome plasticity.</title>
        <authorList>
            <person name="Cazalet C."/>
            <person name="Rusniok C."/>
            <person name="Brueggemann H."/>
            <person name="Zidane N."/>
            <person name="Magnier A."/>
            <person name="Ma L."/>
            <person name="Tichit M."/>
            <person name="Jarraud S."/>
            <person name="Bouchier C."/>
            <person name="Vandenesch F."/>
            <person name="Kunst F."/>
            <person name="Etienne J."/>
            <person name="Glaser P."/>
            <person name="Buchrieser C."/>
        </authorList>
    </citation>
    <scope>NUCLEOTIDE SEQUENCE [LARGE SCALE GENOMIC DNA]</scope>
    <source>
        <strain>Paris</strain>
    </source>
</reference>
<organism>
    <name type="scientific">Legionella pneumophila (strain Paris)</name>
    <dbReference type="NCBI Taxonomy" id="297246"/>
    <lineage>
        <taxon>Bacteria</taxon>
        <taxon>Pseudomonadati</taxon>
        <taxon>Pseudomonadota</taxon>
        <taxon>Gammaproteobacteria</taxon>
        <taxon>Legionellales</taxon>
        <taxon>Legionellaceae</taxon>
        <taxon>Legionella</taxon>
    </lineage>
</organism>
<keyword id="KW-0067">ATP-binding</keyword>
<keyword id="KW-0378">Hydrolase</keyword>
<keyword id="KW-0460">Magnesium</keyword>
<keyword id="KW-0479">Metal-binding</keyword>
<keyword id="KW-0511">Multifunctional enzyme</keyword>
<keyword id="KW-0533">Nickel</keyword>
<keyword id="KW-0547">Nucleotide-binding</keyword>
<keyword id="KW-0548">Nucleotidyltransferase</keyword>
<keyword id="KW-0692">RNA repair</keyword>
<keyword id="KW-0694">RNA-binding</keyword>
<keyword id="KW-0808">Transferase</keyword>
<keyword id="KW-0819">tRNA processing</keyword>
<dbReference type="EC" id="2.7.7.72" evidence="1"/>
<dbReference type="EC" id="3.1.3.-" evidence="1"/>
<dbReference type="EC" id="3.1.4.-" evidence="1"/>
<dbReference type="EMBL" id="CR628336">
    <property type="protein sequence ID" value="CAH13951.1"/>
    <property type="molecule type" value="Genomic_DNA"/>
</dbReference>
<dbReference type="RefSeq" id="WP_014844821.1">
    <property type="nucleotide sequence ID" value="NC_006368.1"/>
</dbReference>
<dbReference type="SMR" id="Q5X1E5"/>
<dbReference type="KEGG" id="lpp:lpp2798"/>
<dbReference type="LegioList" id="lpp2798"/>
<dbReference type="HOGENOM" id="CLU_015961_1_1_6"/>
<dbReference type="GO" id="GO:0005524">
    <property type="term" value="F:ATP binding"/>
    <property type="evidence" value="ECO:0007669"/>
    <property type="project" value="UniProtKB-UniRule"/>
</dbReference>
<dbReference type="GO" id="GO:0004810">
    <property type="term" value="F:CCA tRNA nucleotidyltransferase activity"/>
    <property type="evidence" value="ECO:0007669"/>
    <property type="project" value="UniProtKB-UniRule"/>
</dbReference>
<dbReference type="GO" id="GO:0004112">
    <property type="term" value="F:cyclic-nucleotide phosphodiesterase activity"/>
    <property type="evidence" value="ECO:0007669"/>
    <property type="project" value="UniProtKB-UniRule"/>
</dbReference>
<dbReference type="GO" id="GO:0000287">
    <property type="term" value="F:magnesium ion binding"/>
    <property type="evidence" value="ECO:0007669"/>
    <property type="project" value="UniProtKB-UniRule"/>
</dbReference>
<dbReference type="GO" id="GO:0016791">
    <property type="term" value="F:phosphatase activity"/>
    <property type="evidence" value="ECO:0007669"/>
    <property type="project" value="UniProtKB-UniRule"/>
</dbReference>
<dbReference type="GO" id="GO:0000049">
    <property type="term" value="F:tRNA binding"/>
    <property type="evidence" value="ECO:0007669"/>
    <property type="project" value="UniProtKB-UniRule"/>
</dbReference>
<dbReference type="GO" id="GO:0042245">
    <property type="term" value="P:RNA repair"/>
    <property type="evidence" value="ECO:0007669"/>
    <property type="project" value="UniProtKB-KW"/>
</dbReference>
<dbReference type="GO" id="GO:0001680">
    <property type="term" value="P:tRNA 3'-terminal CCA addition"/>
    <property type="evidence" value="ECO:0007669"/>
    <property type="project" value="UniProtKB-UniRule"/>
</dbReference>
<dbReference type="CDD" id="cd00077">
    <property type="entry name" value="HDc"/>
    <property type="match status" value="1"/>
</dbReference>
<dbReference type="CDD" id="cd05398">
    <property type="entry name" value="NT_ClassII-CCAase"/>
    <property type="match status" value="1"/>
</dbReference>
<dbReference type="Gene3D" id="3.30.460.10">
    <property type="entry name" value="Beta Polymerase, domain 2"/>
    <property type="match status" value="1"/>
</dbReference>
<dbReference type="Gene3D" id="1.10.3090.10">
    <property type="entry name" value="cca-adding enzyme, domain 2"/>
    <property type="match status" value="1"/>
</dbReference>
<dbReference type="HAMAP" id="MF_01261">
    <property type="entry name" value="CCA_bact_type1"/>
    <property type="match status" value="1"/>
</dbReference>
<dbReference type="HAMAP" id="MF_01262">
    <property type="entry name" value="CCA_bact_type2"/>
    <property type="match status" value="1"/>
</dbReference>
<dbReference type="InterPro" id="IPR012006">
    <property type="entry name" value="CCA_bact"/>
</dbReference>
<dbReference type="InterPro" id="IPR003607">
    <property type="entry name" value="HD/PDEase_dom"/>
</dbReference>
<dbReference type="InterPro" id="IPR006674">
    <property type="entry name" value="HD_domain"/>
</dbReference>
<dbReference type="InterPro" id="IPR043519">
    <property type="entry name" value="NT_sf"/>
</dbReference>
<dbReference type="InterPro" id="IPR002646">
    <property type="entry name" value="PolA_pol_head_dom"/>
</dbReference>
<dbReference type="InterPro" id="IPR032828">
    <property type="entry name" value="PolyA_RNA-bd"/>
</dbReference>
<dbReference type="InterPro" id="IPR050124">
    <property type="entry name" value="tRNA_CCA-adding_enzyme"/>
</dbReference>
<dbReference type="NCBIfam" id="NF008137">
    <property type="entry name" value="PRK10885.1"/>
    <property type="match status" value="1"/>
</dbReference>
<dbReference type="PANTHER" id="PTHR47545">
    <property type="entry name" value="MULTIFUNCTIONAL CCA PROTEIN"/>
    <property type="match status" value="1"/>
</dbReference>
<dbReference type="PANTHER" id="PTHR47545:SF1">
    <property type="entry name" value="MULTIFUNCTIONAL CCA PROTEIN"/>
    <property type="match status" value="1"/>
</dbReference>
<dbReference type="Pfam" id="PF01966">
    <property type="entry name" value="HD"/>
    <property type="match status" value="1"/>
</dbReference>
<dbReference type="Pfam" id="PF01743">
    <property type="entry name" value="PolyA_pol"/>
    <property type="match status" value="1"/>
</dbReference>
<dbReference type="Pfam" id="PF12627">
    <property type="entry name" value="PolyA_pol_RNAbd"/>
    <property type="match status" value="1"/>
</dbReference>
<dbReference type="PIRSF" id="PIRSF000813">
    <property type="entry name" value="CCA_bact"/>
    <property type="match status" value="1"/>
</dbReference>
<dbReference type="SUPFAM" id="SSF81301">
    <property type="entry name" value="Nucleotidyltransferase"/>
    <property type="match status" value="1"/>
</dbReference>
<dbReference type="SUPFAM" id="SSF81891">
    <property type="entry name" value="Poly A polymerase C-terminal region-like"/>
    <property type="match status" value="1"/>
</dbReference>
<dbReference type="PROSITE" id="PS51831">
    <property type="entry name" value="HD"/>
    <property type="match status" value="1"/>
</dbReference>
<evidence type="ECO:0000255" key="1">
    <source>
        <dbReference type="HAMAP-Rule" id="MF_01261"/>
    </source>
</evidence>
<name>CCA_LEGPA</name>
<protein>
    <recommendedName>
        <fullName evidence="1">Multifunctional CCA protein</fullName>
    </recommendedName>
    <domain>
        <recommendedName>
            <fullName evidence="1">CCA-adding enzyme</fullName>
            <ecNumber evidence="1">2.7.7.72</ecNumber>
        </recommendedName>
        <alternativeName>
            <fullName evidence="1">CCA tRNA nucleotidyltransferase</fullName>
        </alternativeName>
        <alternativeName>
            <fullName evidence="1">tRNA CCA-pyrophosphorylase</fullName>
        </alternativeName>
        <alternativeName>
            <fullName evidence="1">tRNA adenylyl-/cytidylyl-transferase</fullName>
        </alternativeName>
        <alternativeName>
            <fullName evidence="1">tRNA nucleotidyltransferase</fullName>
        </alternativeName>
        <alternativeName>
            <fullName evidence="1">tRNA-NT</fullName>
        </alternativeName>
    </domain>
    <domain>
        <recommendedName>
            <fullName evidence="1">2'-nucleotidase</fullName>
            <ecNumber evidence="1">3.1.3.-</ecNumber>
        </recommendedName>
    </domain>
    <domain>
        <recommendedName>
            <fullName evidence="1">2',3'-cyclic phosphodiesterase</fullName>
            <ecNumber evidence="1">3.1.4.-</ecNumber>
        </recommendedName>
    </domain>
    <domain>
        <recommendedName>
            <fullName evidence="1">Phosphatase</fullName>
            <ecNumber evidence="1">3.1.3.-</ecNumber>
        </recommendedName>
    </domain>
</protein>
<gene>
    <name evidence="1" type="primary">cca</name>
    <name type="ordered locus">lpp2798</name>
</gene>
<proteinExistence type="inferred from homology"/>
<sequence>MKVYLVGGAVRDRLLGIPVQEQDWVVVGATPEELLKRKYRQVGRDFPVFLHPETKEEYALARTERKSAPGYYGFICDFSESVTLEEDLARRDLTINAMAMDEQGNLIDPYQGQRDLEEKLLRHVSPAFAEDPVRVLRVARFASRFHHLGFKIANETRLLMYSMVKQGELAHLIPERVWQEWQKSLQEKNPEQFILSLRSCDALRVVLPEINSLFGVPNPHQYHQEIDTGIHSLMALRASSELSEEPLVRFAALVHDLGKASTPIQDWPKHHGHEEEGTKLIRALCARLRIPNDYRDLAVTVARAHLNIHRVCELRPNTIVKLLEQVDAFRRPQLFHKILIACQADAESCGKTVVYRQTQLWNEILSECVKVTPQTFIVQGYEGKAIKEAMHQSRVACVERIMTSWKSNEK</sequence>